<keyword id="KW-0007">Acetylation</keyword>
<keyword id="KW-0053">Apoptosis</keyword>
<keyword id="KW-0966">Cell projection</keyword>
<keyword id="KW-0963">Cytoplasm</keyword>
<keyword id="KW-0378">Hydrolase</keyword>
<keyword id="KW-1017">Isopeptide bond</keyword>
<keyword id="KW-0443">Lipid metabolism</keyword>
<keyword id="KW-0524">Neurogenesis</keyword>
<keyword id="KW-0539">Nucleus</keyword>
<keyword id="KW-0597">Phosphoprotein</keyword>
<keyword id="KW-0904">Protein phosphatase</keyword>
<keyword id="KW-1185">Reference proteome</keyword>
<keyword id="KW-0770">Synapse</keyword>
<keyword id="KW-0043">Tumor suppressor</keyword>
<keyword id="KW-0832">Ubl conjugation</keyword>
<name>PTEN_MOUSE</name>
<dbReference type="EC" id="3.1.3.16" evidence="3"/>
<dbReference type="EC" id="3.1.3.48" evidence="3"/>
<dbReference type="EC" id="3.1.3.67" evidence="3"/>
<dbReference type="EC" id="3.1.3.-" evidence="3"/>
<dbReference type="EMBL" id="U92437">
    <property type="protein sequence ID" value="AAC53118.1"/>
    <property type="molecule type" value="mRNA"/>
</dbReference>
<dbReference type="EMBL" id="AK076980">
    <property type="protein sequence ID" value="BAC36545.1"/>
    <property type="molecule type" value="mRNA"/>
</dbReference>
<dbReference type="EMBL" id="AK088717">
    <property type="protein sequence ID" value="BAC40525.1"/>
    <property type="molecule type" value="mRNA"/>
</dbReference>
<dbReference type="EMBL" id="AK148736">
    <property type="protein sequence ID" value="BAE28651.1"/>
    <property type="molecule type" value="mRNA"/>
</dbReference>
<dbReference type="EMBL" id="BC021445">
    <property type="protein sequence ID" value="AAH21445.1"/>
    <property type="molecule type" value="mRNA"/>
</dbReference>
<dbReference type="CCDS" id="CCDS29753.1"/>
<dbReference type="RefSeq" id="NP_032986.1">
    <property type="nucleotide sequence ID" value="NM_008960.2"/>
</dbReference>
<dbReference type="SMR" id="O08586"/>
<dbReference type="BioGRID" id="202449">
    <property type="interactions" value="291"/>
</dbReference>
<dbReference type="ComplexPortal" id="CPX-3154">
    <property type="entry name" value="PTEN phosphatase complex"/>
</dbReference>
<dbReference type="DIP" id="DIP-38740N"/>
<dbReference type="FunCoup" id="O08586">
    <property type="interactions" value="4176"/>
</dbReference>
<dbReference type="IntAct" id="O08586">
    <property type="interactions" value="24"/>
</dbReference>
<dbReference type="MINT" id="O08586"/>
<dbReference type="STRING" id="10090.ENSMUSP00000013807"/>
<dbReference type="iPTMnet" id="O08586"/>
<dbReference type="PhosphoSitePlus" id="O08586"/>
<dbReference type="jPOST" id="O08586"/>
<dbReference type="PaxDb" id="10090-ENSMUSP00000013807"/>
<dbReference type="PeptideAtlas" id="O08586"/>
<dbReference type="ProteomicsDB" id="302005"/>
<dbReference type="Pumba" id="O08586"/>
<dbReference type="Antibodypedia" id="3420">
    <property type="antibodies" value="1732 antibodies from 53 providers"/>
</dbReference>
<dbReference type="DNASU" id="19211"/>
<dbReference type="Ensembl" id="ENSMUST00000013807.8">
    <property type="protein sequence ID" value="ENSMUSP00000013807.8"/>
    <property type="gene ID" value="ENSMUSG00000013663.9"/>
</dbReference>
<dbReference type="GeneID" id="19211"/>
<dbReference type="KEGG" id="mmu:19211"/>
<dbReference type="UCSC" id="uc008hfr.1">
    <property type="organism name" value="mouse"/>
</dbReference>
<dbReference type="AGR" id="MGI:109583"/>
<dbReference type="CTD" id="5728"/>
<dbReference type="MGI" id="MGI:109583">
    <property type="gene designation" value="Pten"/>
</dbReference>
<dbReference type="VEuPathDB" id="HostDB:ENSMUSG00000013663"/>
<dbReference type="eggNOG" id="KOG2283">
    <property type="taxonomic scope" value="Eukaryota"/>
</dbReference>
<dbReference type="GeneTree" id="ENSGT00940000163053"/>
<dbReference type="HOGENOM" id="CLU_020105_5_2_1"/>
<dbReference type="InParanoid" id="O08586"/>
<dbReference type="OMA" id="CKKFKQR"/>
<dbReference type="OrthoDB" id="16692at2759"/>
<dbReference type="PhylomeDB" id="O08586"/>
<dbReference type="TreeFam" id="TF324513"/>
<dbReference type="Reactome" id="R-MMU-1660499">
    <property type="pathway name" value="Synthesis of PIPs at the plasma membrane"/>
</dbReference>
<dbReference type="Reactome" id="R-MMU-1855204">
    <property type="pathway name" value="Synthesis of IP3 and IP4 in the cytosol"/>
</dbReference>
<dbReference type="Reactome" id="R-MMU-199418">
    <property type="pathway name" value="Negative regulation of the PI3K/AKT network"/>
</dbReference>
<dbReference type="Reactome" id="R-MMU-202424">
    <property type="pathway name" value="Downstream TCR signaling"/>
</dbReference>
<dbReference type="Reactome" id="R-MMU-5689880">
    <property type="pathway name" value="Ub-specific processing proteases"/>
</dbReference>
<dbReference type="Reactome" id="R-MMU-5689896">
    <property type="pathway name" value="Ovarian tumor domain proteases"/>
</dbReference>
<dbReference type="Reactome" id="R-MMU-8948747">
    <property type="pathway name" value="Regulation of PTEN localization"/>
</dbReference>
<dbReference type="Reactome" id="R-MMU-8948751">
    <property type="pathway name" value="Regulation of PTEN stability and activity"/>
</dbReference>
<dbReference type="BioGRID-ORCS" id="19211">
    <property type="hits" value="22 hits in 89 CRISPR screens"/>
</dbReference>
<dbReference type="ChiTaRS" id="Pten">
    <property type="organism name" value="mouse"/>
</dbReference>
<dbReference type="PRO" id="PR:O08586"/>
<dbReference type="Proteomes" id="UP000000589">
    <property type="component" value="Chromosome 19"/>
</dbReference>
<dbReference type="RNAct" id="O08586">
    <property type="molecule type" value="protein"/>
</dbReference>
<dbReference type="Bgee" id="ENSMUSG00000013663">
    <property type="expression patterns" value="Expressed in retrosplenial region and 283 other cell types or tissues"/>
</dbReference>
<dbReference type="ExpressionAtlas" id="O08586">
    <property type="expression patterns" value="baseline and differential"/>
</dbReference>
<dbReference type="GO" id="GO:0005737">
    <property type="term" value="C:cytoplasm"/>
    <property type="evidence" value="ECO:0000314"/>
    <property type="project" value="MGI"/>
</dbReference>
<dbReference type="GO" id="GO:0043197">
    <property type="term" value="C:dendritic spine"/>
    <property type="evidence" value="ECO:0007669"/>
    <property type="project" value="UniProtKB-SubCell"/>
</dbReference>
<dbReference type="GO" id="GO:0035749">
    <property type="term" value="C:myelin sheath adaxonal region"/>
    <property type="evidence" value="ECO:0000314"/>
    <property type="project" value="BHF-UCL"/>
</dbReference>
<dbReference type="GO" id="GO:0043005">
    <property type="term" value="C:neuron projection"/>
    <property type="evidence" value="ECO:0000314"/>
    <property type="project" value="BHF-UCL"/>
</dbReference>
<dbReference type="GO" id="GO:0005634">
    <property type="term" value="C:nucleus"/>
    <property type="evidence" value="ECO:0000314"/>
    <property type="project" value="MGI"/>
</dbReference>
<dbReference type="GO" id="GO:0016605">
    <property type="term" value="C:PML body"/>
    <property type="evidence" value="ECO:0007669"/>
    <property type="project" value="UniProtKB-SubCell"/>
</dbReference>
<dbReference type="GO" id="GO:0014069">
    <property type="term" value="C:postsynaptic density"/>
    <property type="evidence" value="ECO:0007669"/>
    <property type="project" value="UniProtKB-SubCell"/>
</dbReference>
<dbReference type="GO" id="GO:0043220">
    <property type="term" value="C:Schmidt-Lanterman incisure"/>
    <property type="evidence" value="ECO:0000314"/>
    <property type="project" value="BHF-UCL"/>
</dbReference>
<dbReference type="GO" id="GO:0030351">
    <property type="term" value="F:inositol-1,3,4,5,6-pentakisphosphate 3-phosphatase activity"/>
    <property type="evidence" value="ECO:0000250"/>
    <property type="project" value="UniProtKB"/>
</dbReference>
<dbReference type="GO" id="GO:0051717">
    <property type="term" value="F:inositol-1,3,4,5-tetrakisphosphate 3-phosphatase activity"/>
    <property type="evidence" value="ECO:0000250"/>
    <property type="project" value="UniProtKB"/>
</dbReference>
<dbReference type="GO" id="GO:0030165">
    <property type="term" value="F:PDZ domain binding"/>
    <property type="evidence" value="ECO:0000250"/>
    <property type="project" value="UniProtKB"/>
</dbReference>
<dbReference type="GO" id="GO:0016314">
    <property type="term" value="F:phosphatidylinositol-3,4,5-trisphosphate 3-phosphatase activity"/>
    <property type="evidence" value="ECO:0000314"/>
    <property type="project" value="MGI"/>
</dbReference>
<dbReference type="GO" id="GO:0051800">
    <property type="term" value="F:phosphatidylinositol-3,4-bisphosphate 3-phosphatase activity"/>
    <property type="evidence" value="ECO:0000250"/>
    <property type="project" value="UniProtKB"/>
</dbReference>
<dbReference type="GO" id="GO:0004438">
    <property type="term" value="F:phosphatidylinositol-3-phosphate phosphatase activity"/>
    <property type="evidence" value="ECO:0000250"/>
    <property type="project" value="UniProtKB"/>
</dbReference>
<dbReference type="GO" id="GO:0019901">
    <property type="term" value="F:protein kinase binding"/>
    <property type="evidence" value="ECO:0000353"/>
    <property type="project" value="UniProtKB"/>
</dbReference>
<dbReference type="GO" id="GO:0004722">
    <property type="term" value="F:protein serine/threonine phosphatase activity"/>
    <property type="evidence" value="ECO:0000250"/>
    <property type="project" value="UniProtKB"/>
</dbReference>
<dbReference type="GO" id="GO:0004725">
    <property type="term" value="F:protein tyrosine phosphatase activity"/>
    <property type="evidence" value="ECO:0000250"/>
    <property type="project" value="UniProtKB"/>
</dbReference>
<dbReference type="GO" id="GO:1990757">
    <property type="term" value="F:ubiquitin ligase activator activity"/>
    <property type="evidence" value="ECO:0000315"/>
    <property type="project" value="BHF-UCL"/>
</dbReference>
<dbReference type="GO" id="GO:1990381">
    <property type="term" value="F:ubiquitin-specific protease binding"/>
    <property type="evidence" value="ECO:0000266"/>
    <property type="project" value="MGI"/>
</dbReference>
<dbReference type="GO" id="GO:0030534">
    <property type="term" value="P:adult behavior"/>
    <property type="evidence" value="ECO:0000315"/>
    <property type="project" value="CACAO"/>
</dbReference>
<dbReference type="GO" id="GO:0001525">
    <property type="term" value="P:angiogenesis"/>
    <property type="evidence" value="ECO:0000315"/>
    <property type="project" value="MGI"/>
</dbReference>
<dbReference type="GO" id="GO:0006915">
    <property type="term" value="P:apoptotic process"/>
    <property type="evidence" value="ECO:0000316"/>
    <property type="project" value="MGI"/>
</dbReference>
<dbReference type="GO" id="GO:0042100">
    <property type="term" value="P:B cell proliferation"/>
    <property type="evidence" value="ECO:0000315"/>
    <property type="project" value="MGI"/>
</dbReference>
<dbReference type="GO" id="GO:0048854">
    <property type="term" value="P:brain morphogenesis"/>
    <property type="evidence" value="ECO:0000315"/>
    <property type="project" value="CACAO"/>
</dbReference>
<dbReference type="GO" id="GO:0048738">
    <property type="term" value="P:cardiac muscle tissue development"/>
    <property type="evidence" value="ECO:0000315"/>
    <property type="project" value="MGI"/>
</dbReference>
<dbReference type="GO" id="GO:0016477">
    <property type="term" value="P:cell migration"/>
    <property type="evidence" value="ECO:0000315"/>
    <property type="project" value="MGI"/>
</dbReference>
<dbReference type="GO" id="GO:0008283">
    <property type="term" value="P:cell population proliferation"/>
    <property type="evidence" value="ECO:0000315"/>
    <property type="project" value="MGI"/>
</dbReference>
<dbReference type="GO" id="GO:0036294">
    <property type="term" value="P:cellular response to decreased oxygen levels"/>
    <property type="evidence" value="ECO:0000314"/>
    <property type="project" value="MGI"/>
</dbReference>
<dbReference type="GO" id="GO:0071456">
    <property type="term" value="P:cellular response to hypoxia"/>
    <property type="evidence" value="ECO:0000314"/>
    <property type="project" value="MGI"/>
</dbReference>
<dbReference type="GO" id="GO:0007417">
    <property type="term" value="P:central nervous system development"/>
    <property type="evidence" value="ECO:0000315"/>
    <property type="project" value="MGI"/>
</dbReference>
<dbReference type="GO" id="GO:0032286">
    <property type="term" value="P:central nervous system myelin maintenance"/>
    <property type="evidence" value="ECO:0000315"/>
    <property type="project" value="BHF-UCL"/>
</dbReference>
<dbReference type="GO" id="GO:0021955">
    <property type="term" value="P:central nervous system neuron axonogenesis"/>
    <property type="evidence" value="ECO:0000315"/>
    <property type="project" value="CACAO"/>
</dbReference>
<dbReference type="GO" id="GO:0060997">
    <property type="term" value="P:dendritic spine morphogenesis"/>
    <property type="evidence" value="ECO:0000315"/>
    <property type="project" value="BHF-UCL"/>
</dbReference>
<dbReference type="GO" id="GO:0021542">
    <property type="term" value="P:dentate gyrus development"/>
    <property type="evidence" value="ECO:0000315"/>
    <property type="project" value="CACAO"/>
</dbReference>
<dbReference type="GO" id="GO:0043542">
    <property type="term" value="P:endothelial cell migration"/>
    <property type="evidence" value="ECO:0000315"/>
    <property type="project" value="MGI"/>
</dbReference>
<dbReference type="GO" id="GO:0048853">
    <property type="term" value="P:forebrain morphogenesis"/>
    <property type="evidence" value="ECO:0000315"/>
    <property type="project" value="BHF-UCL"/>
</dbReference>
<dbReference type="GO" id="GO:0010467">
    <property type="term" value="P:gene expression"/>
    <property type="evidence" value="ECO:0000316"/>
    <property type="project" value="MGI"/>
</dbReference>
<dbReference type="GO" id="GO:0007507">
    <property type="term" value="P:heart development"/>
    <property type="evidence" value="ECO:0000315"/>
    <property type="project" value="MGI"/>
</dbReference>
<dbReference type="GO" id="GO:0007611">
    <property type="term" value="P:learning or memory"/>
    <property type="evidence" value="ECO:0000315"/>
    <property type="project" value="CACAO"/>
</dbReference>
<dbReference type="GO" id="GO:0045475">
    <property type="term" value="P:locomotor rhythm"/>
    <property type="evidence" value="ECO:0000315"/>
    <property type="project" value="CACAO"/>
</dbReference>
<dbReference type="GO" id="GO:0007626">
    <property type="term" value="P:locomotory behavior"/>
    <property type="evidence" value="ECO:0000315"/>
    <property type="project" value="CACAO"/>
</dbReference>
<dbReference type="GO" id="GO:0060291">
    <property type="term" value="P:long-term synaptic potentiation"/>
    <property type="evidence" value="ECO:0000315"/>
    <property type="project" value="BHF-UCL"/>
</dbReference>
<dbReference type="GO" id="GO:0060179">
    <property type="term" value="P:male mating behavior"/>
    <property type="evidence" value="ECO:0000315"/>
    <property type="project" value="CACAO"/>
</dbReference>
<dbReference type="GO" id="GO:0042711">
    <property type="term" value="P:maternal behavior"/>
    <property type="evidence" value="ECO:0000315"/>
    <property type="project" value="CACAO"/>
</dbReference>
<dbReference type="GO" id="GO:0033555">
    <property type="term" value="P:multicellular organismal response to stress"/>
    <property type="evidence" value="ECO:0000315"/>
    <property type="project" value="BHF-UCL"/>
</dbReference>
<dbReference type="GO" id="GO:0042552">
    <property type="term" value="P:myelination"/>
    <property type="evidence" value="ECO:0000315"/>
    <property type="project" value="MGI"/>
</dbReference>
<dbReference type="GO" id="GO:0060766">
    <property type="term" value="P:negative regulation of androgen receptor signaling pathway"/>
    <property type="evidence" value="ECO:0000315"/>
    <property type="project" value="MGI"/>
</dbReference>
<dbReference type="GO" id="GO:0043066">
    <property type="term" value="P:negative regulation of apoptotic process"/>
    <property type="evidence" value="ECO:0000315"/>
    <property type="project" value="UniProtKB"/>
</dbReference>
<dbReference type="GO" id="GO:0048681">
    <property type="term" value="P:negative regulation of axon regeneration"/>
    <property type="evidence" value="ECO:0000315"/>
    <property type="project" value="ParkinsonsUK-UCL"/>
</dbReference>
<dbReference type="GO" id="GO:0050771">
    <property type="term" value="P:negative regulation of axonogenesis"/>
    <property type="evidence" value="ECO:0000315"/>
    <property type="project" value="BHF-UCL"/>
</dbReference>
<dbReference type="GO" id="GO:0030889">
    <property type="term" value="P:negative regulation of B cell proliferation"/>
    <property type="evidence" value="ECO:0000315"/>
    <property type="project" value="MGI"/>
</dbReference>
<dbReference type="GO" id="GO:0060044">
    <property type="term" value="P:negative regulation of cardiac muscle cell proliferation"/>
    <property type="evidence" value="ECO:0000316"/>
    <property type="project" value="BHF-UCL"/>
</dbReference>
<dbReference type="GO" id="GO:0030336">
    <property type="term" value="P:negative regulation of cell migration"/>
    <property type="evidence" value="ECO:0000250"/>
    <property type="project" value="UniProtKB"/>
</dbReference>
<dbReference type="GO" id="GO:0008285">
    <property type="term" value="P:negative regulation of cell population proliferation"/>
    <property type="evidence" value="ECO:0000316"/>
    <property type="project" value="MGI"/>
</dbReference>
<dbReference type="GO" id="GO:0045792">
    <property type="term" value="P:negative regulation of cell size"/>
    <property type="evidence" value="ECO:0000315"/>
    <property type="project" value="CACAO"/>
</dbReference>
<dbReference type="GO" id="GO:2000773">
    <property type="term" value="P:negative regulation of cellular senescence"/>
    <property type="evidence" value="ECO:0000315"/>
    <property type="project" value="BHF-UCL"/>
</dbReference>
<dbReference type="GO" id="GO:0061002">
    <property type="term" value="P:negative regulation of dendritic spine morphogenesis"/>
    <property type="evidence" value="ECO:0000315"/>
    <property type="project" value="CACAO"/>
</dbReference>
<dbReference type="GO" id="GO:0050680">
    <property type="term" value="P:negative regulation of epithelial cell proliferation"/>
    <property type="evidence" value="ECO:0000315"/>
    <property type="project" value="MGI"/>
</dbReference>
<dbReference type="GO" id="GO:0090394">
    <property type="term" value="P:negative regulation of excitatory postsynaptic potential"/>
    <property type="evidence" value="ECO:0000315"/>
    <property type="project" value="BHF-UCL"/>
</dbReference>
<dbReference type="GO" id="GO:0051895">
    <property type="term" value="P:negative regulation of focal adhesion assembly"/>
    <property type="evidence" value="ECO:0000250"/>
    <property type="project" value="UniProtKB"/>
</dbReference>
<dbReference type="GO" id="GO:0031642">
    <property type="term" value="P:negative regulation of myelination"/>
    <property type="evidence" value="ECO:0000315"/>
    <property type="project" value="MGI"/>
</dbReference>
<dbReference type="GO" id="GO:0046621">
    <property type="term" value="P:negative regulation of organ growth"/>
    <property type="evidence" value="ECO:0000315"/>
    <property type="project" value="CACAO"/>
</dbReference>
<dbReference type="GO" id="GO:0051898">
    <property type="term" value="P:negative regulation of phosphatidylinositol 3-kinase/protein kinase B signal transduction"/>
    <property type="evidence" value="ECO:0000315"/>
    <property type="project" value="UniProtKB"/>
</dbReference>
<dbReference type="GO" id="GO:0090071">
    <property type="term" value="P:negative regulation of ribosome biogenesis"/>
    <property type="evidence" value="ECO:0000315"/>
    <property type="project" value="CACAO"/>
</dbReference>
<dbReference type="GO" id="GO:2000808">
    <property type="term" value="P:negative regulation of synaptic vesicle clustering"/>
    <property type="evidence" value="ECO:0000315"/>
    <property type="project" value="CACAO"/>
</dbReference>
<dbReference type="GO" id="GO:0042130">
    <property type="term" value="P:negative regulation of T cell proliferation"/>
    <property type="evidence" value="ECO:0000315"/>
    <property type="project" value="MGI"/>
</dbReference>
<dbReference type="GO" id="GO:1904262">
    <property type="term" value="P:negative regulation of TORC1 signaling"/>
    <property type="evidence" value="ECO:0000315"/>
    <property type="project" value="MGI"/>
</dbReference>
<dbReference type="GO" id="GO:0007270">
    <property type="term" value="P:neuron-neuron synaptic transmission"/>
    <property type="evidence" value="ECO:0000315"/>
    <property type="project" value="BHF-UCL"/>
</dbReference>
<dbReference type="GO" id="GO:0043491">
    <property type="term" value="P:phosphatidylinositol 3-kinase/protein kinase B signal transduction"/>
    <property type="evidence" value="ECO:0000315"/>
    <property type="project" value="MGI"/>
</dbReference>
<dbReference type="GO" id="GO:0046856">
    <property type="term" value="P:phosphatidylinositol dephosphorylation"/>
    <property type="evidence" value="ECO:0007669"/>
    <property type="project" value="InterPro"/>
</dbReference>
<dbReference type="GO" id="GO:2001235">
    <property type="term" value="P:positive regulation of apoptotic signaling pathway"/>
    <property type="evidence" value="ECO:0000315"/>
    <property type="project" value="MGI"/>
</dbReference>
<dbReference type="GO" id="GO:0008284">
    <property type="term" value="P:positive regulation of cell population proliferation"/>
    <property type="evidence" value="ECO:0000315"/>
    <property type="project" value="BHF-UCL"/>
</dbReference>
<dbReference type="GO" id="GO:0070374">
    <property type="term" value="P:positive regulation of ERK1 and ERK2 cascade"/>
    <property type="evidence" value="ECO:0000315"/>
    <property type="project" value="MGI"/>
</dbReference>
<dbReference type="GO" id="GO:2000463">
    <property type="term" value="P:positive regulation of excitatory postsynaptic potential"/>
    <property type="evidence" value="ECO:0000315"/>
    <property type="project" value="BHF-UCL"/>
</dbReference>
<dbReference type="GO" id="GO:0097107">
    <property type="term" value="P:postsynaptic density assembly"/>
    <property type="evidence" value="ECO:0000315"/>
    <property type="project" value="BHF-UCL"/>
</dbReference>
<dbReference type="GO" id="GO:0060134">
    <property type="term" value="P:prepulse inhibition"/>
    <property type="evidence" value="ECO:0000315"/>
    <property type="project" value="CACAO"/>
</dbReference>
<dbReference type="GO" id="GO:0097105">
    <property type="term" value="P:presynaptic membrane assembly"/>
    <property type="evidence" value="ECO:0000315"/>
    <property type="project" value="BHF-UCL"/>
</dbReference>
<dbReference type="GO" id="GO:0060736">
    <property type="term" value="P:prostate gland growth"/>
    <property type="evidence" value="ECO:0000315"/>
    <property type="project" value="MGI"/>
</dbReference>
<dbReference type="GO" id="GO:0006470">
    <property type="term" value="P:protein dephosphorylation"/>
    <property type="evidence" value="ECO:0000250"/>
    <property type="project" value="UniProtKB"/>
</dbReference>
<dbReference type="GO" id="GO:0048679">
    <property type="term" value="P:regulation of axon regeneration"/>
    <property type="evidence" value="ECO:0000316"/>
    <property type="project" value="MGI"/>
</dbReference>
<dbReference type="GO" id="GO:0002902">
    <property type="term" value="P:regulation of B cell apoptotic process"/>
    <property type="evidence" value="ECO:0000315"/>
    <property type="project" value="MGI"/>
</dbReference>
<dbReference type="GO" id="GO:0051726">
    <property type="term" value="P:regulation of cell cycle"/>
    <property type="evidence" value="ECO:0000316"/>
    <property type="project" value="MGI"/>
</dbReference>
<dbReference type="GO" id="GO:0032535">
    <property type="term" value="P:regulation of cellular component size"/>
    <property type="evidence" value="ECO:0000315"/>
    <property type="project" value="CACAO"/>
</dbReference>
<dbReference type="GO" id="GO:0060341">
    <property type="term" value="P:regulation of cellular localization"/>
    <property type="evidence" value="ECO:0000315"/>
    <property type="project" value="CACAO"/>
</dbReference>
<dbReference type="GO" id="GO:2000109">
    <property type="term" value="P:regulation of macrophage apoptotic process"/>
    <property type="evidence" value="ECO:0000315"/>
    <property type="project" value="MGI"/>
</dbReference>
<dbReference type="GO" id="GO:0010975">
    <property type="term" value="P:regulation of neuron projection development"/>
    <property type="evidence" value="ECO:0000315"/>
    <property type="project" value="UniProtKB"/>
</dbReference>
<dbReference type="GO" id="GO:0031647">
    <property type="term" value="P:regulation of protein stability"/>
    <property type="evidence" value="ECO:0000250"/>
    <property type="project" value="UniProtKB"/>
</dbReference>
<dbReference type="GO" id="GO:0032228">
    <property type="term" value="P:regulation of synaptic transmission, GABAergic"/>
    <property type="evidence" value="ECO:0000315"/>
    <property type="project" value="MGI"/>
</dbReference>
<dbReference type="GO" id="GO:0060024">
    <property type="term" value="P:rhythmic synaptic transmission"/>
    <property type="evidence" value="ECO:0000315"/>
    <property type="project" value="CACAO"/>
</dbReference>
<dbReference type="GO" id="GO:0035176">
    <property type="term" value="P:social behavior"/>
    <property type="evidence" value="ECO:0000315"/>
    <property type="project" value="CACAO"/>
</dbReference>
<dbReference type="GO" id="GO:0007416">
    <property type="term" value="P:synapse assembly"/>
    <property type="evidence" value="ECO:0000315"/>
    <property type="project" value="BHF-UCL"/>
</dbReference>
<dbReference type="GO" id="GO:0060074">
    <property type="term" value="P:synapse maturation"/>
    <property type="evidence" value="ECO:0000315"/>
    <property type="project" value="BHF-UCL"/>
</dbReference>
<dbReference type="GO" id="GO:0042098">
    <property type="term" value="P:T cell proliferation"/>
    <property type="evidence" value="ECO:0000315"/>
    <property type="project" value="MGI"/>
</dbReference>
<dbReference type="CDD" id="cd14509">
    <property type="entry name" value="PTP_PTEN"/>
    <property type="match status" value="1"/>
</dbReference>
<dbReference type="FunFam" id="2.60.40.1110:FF:000003">
    <property type="entry name" value="Phosphatidylinositol 3,4,5-trisphosphate 3-phosphatase and dual-specificity protein phosphatase PTEN"/>
    <property type="match status" value="1"/>
</dbReference>
<dbReference type="FunFam" id="3.90.190.10:FF:000029">
    <property type="entry name" value="Phosphatidylinositol 3,4,5-trisphosphate 3-phosphatase and dual-specificity protein phosphatase PTEN"/>
    <property type="match status" value="1"/>
</dbReference>
<dbReference type="Gene3D" id="2.60.40.1110">
    <property type="match status" value="1"/>
</dbReference>
<dbReference type="Gene3D" id="3.90.190.10">
    <property type="entry name" value="Protein tyrosine phosphatase superfamily"/>
    <property type="match status" value="1"/>
</dbReference>
<dbReference type="InterPro" id="IPR017361">
    <property type="entry name" value="Bifunc_PIno_P3_Pase/Pase_PTEN"/>
</dbReference>
<dbReference type="InterPro" id="IPR035892">
    <property type="entry name" value="C2_domain_sf"/>
</dbReference>
<dbReference type="InterPro" id="IPR051281">
    <property type="entry name" value="Dual-spec_lipid-protein_phosph"/>
</dbReference>
<dbReference type="InterPro" id="IPR029021">
    <property type="entry name" value="Prot-tyrosine_phosphatase-like"/>
</dbReference>
<dbReference type="InterPro" id="IPR045101">
    <property type="entry name" value="PTP_PTEN"/>
</dbReference>
<dbReference type="InterPro" id="IPR014020">
    <property type="entry name" value="Tensin_C2-dom"/>
</dbReference>
<dbReference type="InterPro" id="IPR029023">
    <property type="entry name" value="Tensin_phosphatase"/>
</dbReference>
<dbReference type="InterPro" id="IPR016130">
    <property type="entry name" value="Tyr_Pase_AS"/>
</dbReference>
<dbReference type="InterPro" id="IPR003595">
    <property type="entry name" value="Tyr_Pase_cat"/>
</dbReference>
<dbReference type="InterPro" id="IPR000387">
    <property type="entry name" value="Tyr_Pase_dom"/>
</dbReference>
<dbReference type="PANTHER" id="PTHR12305">
    <property type="entry name" value="PHOSPHATASE WITH HOMOLOGY TO TENSIN"/>
    <property type="match status" value="1"/>
</dbReference>
<dbReference type="PANTHER" id="PTHR12305:SF81">
    <property type="entry name" value="PHOSPHATIDYLINOSITOL 3,4,5-TRISPHOSPHATE 3-PHOSPHATASE AND DUAL-SPECIFICITY PROTEIN PHOSPHATASE PTEN"/>
    <property type="match status" value="1"/>
</dbReference>
<dbReference type="Pfam" id="PF10409">
    <property type="entry name" value="PTEN_C2"/>
    <property type="match status" value="1"/>
</dbReference>
<dbReference type="Pfam" id="PF22785">
    <property type="entry name" value="Tc-R-P"/>
    <property type="match status" value="1"/>
</dbReference>
<dbReference type="PIRSF" id="PIRSF038025">
    <property type="entry name" value="PTEN"/>
    <property type="match status" value="1"/>
</dbReference>
<dbReference type="SMART" id="SM01326">
    <property type="entry name" value="PTEN_C2"/>
    <property type="match status" value="1"/>
</dbReference>
<dbReference type="SMART" id="SM00404">
    <property type="entry name" value="PTPc_motif"/>
    <property type="match status" value="1"/>
</dbReference>
<dbReference type="SMART" id="SM01301">
    <property type="entry name" value="PTPlike_phytase"/>
    <property type="match status" value="1"/>
</dbReference>
<dbReference type="SUPFAM" id="SSF52799">
    <property type="entry name" value="(Phosphotyrosine protein) phosphatases II"/>
    <property type="match status" value="1"/>
</dbReference>
<dbReference type="SUPFAM" id="SSF49562">
    <property type="entry name" value="C2 domain (Calcium/lipid-binding domain, CaLB)"/>
    <property type="match status" value="1"/>
</dbReference>
<dbReference type="PROSITE" id="PS51182">
    <property type="entry name" value="C2_TENSIN"/>
    <property type="match status" value="1"/>
</dbReference>
<dbReference type="PROSITE" id="PS51181">
    <property type="entry name" value="PPASE_TENSIN"/>
    <property type="match status" value="1"/>
</dbReference>
<dbReference type="PROSITE" id="PS50056">
    <property type="entry name" value="TYR_PHOSPHATASE_2"/>
    <property type="match status" value="1"/>
</dbReference>
<accession>O08586</accession>
<accession>Q3UFB0</accession>
<accession>Q542G1</accession>
<organism>
    <name type="scientific">Mus musculus</name>
    <name type="common">Mouse</name>
    <dbReference type="NCBI Taxonomy" id="10090"/>
    <lineage>
        <taxon>Eukaryota</taxon>
        <taxon>Metazoa</taxon>
        <taxon>Chordata</taxon>
        <taxon>Craniata</taxon>
        <taxon>Vertebrata</taxon>
        <taxon>Euteleostomi</taxon>
        <taxon>Mammalia</taxon>
        <taxon>Eutheria</taxon>
        <taxon>Euarchontoglires</taxon>
        <taxon>Glires</taxon>
        <taxon>Rodentia</taxon>
        <taxon>Myomorpha</taxon>
        <taxon>Muroidea</taxon>
        <taxon>Muridae</taxon>
        <taxon>Murinae</taxon>
        <taxon>Mus</taxon>
        <taxon>Mus</taxon>
    </lineage>
</organism>
<evidence type="ECO:0000250" key="1"/>
<evidence type="ECO:0000250" key="2">
    <source>
        <dbReference type="UniProtKB" id="O54857"/>
    </source>
</evidence>
<evidence type="ECO:0000250" key="3">
    <source>
        <dbReference type="UniProtKB" id="P60484"/>
    </source>
</evidence>
<evidence type="ECO:0000255" key="4">
    <source>
        <dbReference type="PROSITE-ProRule" id="PRU00589"/>
    </source>
</evidence>
<evidence type="ECO:0000255" key="5">
    <source>
        <dbReference type="PROSITE-ProRule" id="PRU00590"/>
    </source>
</evidence>
<evidence type="ECO:0000256" key="6">
    <source>
        <dbReference type="SAM" id="MobiDB-lite"/>
    </source>
</evidence>
<evidence type="ECO:0000269" key="7">
    <source>
    </source>
</evidence>
<evidence type="ECO:0000269" key="8">
    <source>
    </source>
</evidence>
<evidence type="ECO:0000269" key="9">
    <source>
    </source>
</evidence>
<evidence type="ECO:0000269" key="10">
    <source>
    </source>
</evidence>
<evidence type="ECO:0000269" key="11">
    <source>
    </source>
</evidence>
<evidence type="ECO:0000269" key="12">
    <source>
    </source>
</evidence>
<evidence type="ECO:0000269" key="13">
    <source>
    </source>
</evidence>
<evidence type="ECO:0000269" key="14">
    <source>
    </source>
</evidence>
<evidence type="ECO:0000305" key="15"/>
<evidence type="ECO:0000305" key="16">
    <source>
    </source>
</evidence>
<evidence type="ECO:0007744" key="17">
    <source>
    </source>
</evidence>
<evidence type="ECO:0007744" key="18">
    <source>
    </source>
</evidence>
<protein>
    <recommendedName>
        <fullName evidence="3">Phosphatidylinositol 3,4,5-trisphosphate 3-phosphatase and dual-specificity protein phosphatase PTEN</fullName>
        <ecNumber evidence="3">3.1.3.16</ecNumber>
        <ecNumber evidence="3">3.1.3.48</ecNumber>
        <ecNumber evidence="3">3.1.3.67</ecNumber>
    </recommendedName>
    <alternativeName>
        <fullName evidence="3">Inositol polyphosphate 3-phosphatase</fullName>
        <ecNumber evidence="3">3.1.3.-</ecNumber>
    </alternativeName>
    <alternativeName>
        <fullName>Mutated in multiple advanced cancers 1</fullName>
    </alternativeName>
    <alternativeName>
        <fullName>Phosphatase and tensin homolog</fullName>
    </alternativeName>
</protein>
<proteinExistence type="evidence at protein level"/>
<gene>
    <name type="primary">Pten</name>
    <name type="synonym">Mmac1</name>
</gene>
<reference key="1">
    <citation type="journal article" date="1997" name="Nat. Genet.">
        <title>Identification of a candidate tumour suppressor gene, MMAC1, at chromosome 10q23.3 that is mutated in multiple advanced cancers.</title>
        <authorList>
            <person name="Steck P.A."/>
            <person name="Pershouse M.A."/>
            <person name="Jasser S.A."/>
            <person name="Lin H."/>
            <person name="Yung W.K.A."/>
            <person name="Ligon A.H."/>
            <person name="Langford L.A."/>
            <person name="Baumgard M.L."/>
            <person name="Hattier T."/>
            <person name="Davis T."/>
            <person name="Frye C."/>
            <person name="Hu R."/>
            <person name="Swedlund B."/>
            <person name="Teng D.H.-F."/>
            <person name="Tavtigian S.V."/>
        </authorList>
    </citation>
    <scope>NUCLEOTIDE SEQUENCE [MRNA]</scope>
</reference>
<reference key="2">
    <citation type="journal article" date="2005" name="Science">
        <title>The transcriptional landscape of the mammalian genome.</title>
        <authorList>
            <person name="Carninci P."/>
            <person name="Kasukawa T."/>
            <person name="Katayama S."/>
            <person name="Gough J."/>
            <person name="Frith M.C."/>
            <person name="Maeda N."/>
            <person name="Oyama R."/>
            <person name="Ravasi T."/>
            <person name="Lenhard B."/>
            <person name="Wells C."/>
            <person name="Kodzius R."/>
            <person name="Shimokawa K."/>
            <person name="Bajic V.B."/>
            <person name="Brenner S.E."/>
            <person name="Batalov S."/>
            <person name="Forrest A.R."/>
            <person name="Zavolan M."/>
            <person name="Davis M.J."/>
            <person name="Wilming L.G."/>
            <person name="Aidinis V."/>
            <person name="Allen J.E."/>
            <person name="Ambesi-Impiombato A."/>
            <person name="Apweiler R."/>
            <person name="Aturaliya R.N."/>
            <person name="Bailey T.L."/>
            <person name="Bansal M."/>
            <person name="Baxter L."/>
            <person name="Beisel K.W."/>
            <person name="Bersano T."/>
            <person name="Bono H."/>
            <person name="Chalk A.M."/>
            <person name="Chiu K.P."/>
            <person name="Choudhary V."/>
            <person name="Christoffels A."/>
            <person name="Clutterbuck D.R."/>
            <person name="Crowe M.L."/>
            <person name="Dalla E."/>
            <person name="Dalrymple B.P."/>
            <person name="de Bono B."/>
            <person name="Della Gatta G."/>
            <person name="di Bernardo D."/>
            <person name="Down T."/>
            <person name="Engstrom P."/>
            <person name="Fagiolini M."/>
            <person name="Faulkner G."/>
            <person name="Fletcher C.F."/>
            <person name="Fukushima T."/>
            <person name="Furuno M."/>
            <person name="Futaki S."/>
            <person name="Gariboldi M."/>
            <person name="Georgii-Hemming P."/>
            <person name="Gingeras T.R."/>
            <person name="Gojobori T."/>
            <person name="Green R.E."/>
            <person name="Gustincich S."/>
            <person name="Harbers M."/>
            <person name="Hayashi Y."/>
            <person name="Hensch T.K."/>
            <person name="Hirokawa N."/>
            <person name="Hill D."/>
            <person name="Huminiecki L."/>
            <person name="Iacono M."/>
            <person name="Ikeo K."/>
            <person name="Iwama A."/>
            <person name="Ishikawa T."/>
            <person name="Jakt M."/>
            <person name="Kanapin A."/>
            <person name="Katoh M."/>
            <person name="Kawasawa Y."/>
            <person name="Kelso J."/>
            <person name="Kitamura H."/>
            <person name="Kitano H."/>
            <person name="Kollias G."/>
            <person name="Krishnan S.P."/>
            <person name="Kruger A."/>
            <person name="Kummerfeld S.K."/>
            <person name="Kurochkin I.V."/>
            <person name="Lareau L.F."/>
            <person name="Lazarevic D."/>
            <person name="Lipovich L."/>
            <person name="Liu J."/>
            <person name="Liuni S."/>
            <person name="McWilliam S."/>
            <person name="Madan Babu M."/>
            <person name="Madera M."/>
            <person name="Marchionni L."/>
            <person name="Matsuda H."/>
            <person name="Matsuzawa S."/>
            <person name="Miki H."/>
            <person name="Mignone F."/>
            <person name="Miyake S."/>
            <person name="Morris K."/>
            <person name="Mottagui-Tabar S."/>
            <person name="Mulder N."/>
            <person name="Nakano N."/>
            <person name="Nakauchi H."/>
            <person name="Ng P."/>
            <person name="Nilsson R."/>
            <person name="Nishiguchi S."/>
            <person name="Nishikawa S."/>
            <person name="Nori F."/>
            <person name="Ohara O."/>
            <person name="Okazaki Y."/>
            <person name="Orlando V."/>
            <person name="Pang K.C."/>
            <person name="Pavan W.J."/>
            <person name="Pavesi G."/>
            <person name="Pesole G."/>
            <person name="Petrovsky N."/>
            <person name="Piazza S."/>
            <person name="Reed J."/>
            <person name="Reid J.F."/>
            <person name="Ring B.Z."/>
            <person name="Ringwald M."/>
            <person name="Rost B."/>
            <person name="Ruan Y."/>
            <person name="Salzberg S.L."/>
            <person name="Sandelin A."/>
            <person name="Schneider C."/>
            <person name="Schoenbach C."/>
            <person name="Sekiguchi K."/>
            <person name="Semple C.A."/>
            <person name="Seno S."/>
            <person name="Sessa L."/>
            <person name="Sheng Y."/>
            <person name="Shibata Y."/>
            <person name="Shimada H."/>
            <person name="Shimada K."/>
            <person name="Silva D."/>
            <person name="Sinclair B."/>
            <person name="Sperling S."/>
            <person name="Stupka E."/>
            <person name="Sugiura K."/>
            <person name="Sultana R."/>
            <person name="Takenaka Y."/>
            <person name="Taki K."/>
            <person name="Tammoja K."/>
            <person name="Tan S.L."/>
            <person name="Tang S."/>
            <person name="Taylor M.S."/>
            <person name="Tegner J."/>
            <person name="Teichmann S.A."/>
            <person name="Ueda H.R."/>
            <person name="van Nimwegen E."/>
            <person name="Verardo R."/>
            <person name="Wei C.L."/>
            <person name="Yagi K."/>
            <person name="Yamanishi H."/>
            <person name="Zabarovsky E."/>
            <person name="Zhu S."/>
            <person name="Zimmer A."/>
            <person name="Hide W."/>
            <person name="Bult C."/>
            <person name="Grimmond S.M."/>
            <person name="Teasdale R.D."/>
            <person name="Liu E.T."/>
            <person name="Brusic V."/>
            <person name="Quackenbush J."/>
            <person name="Wahlestedt C."/>
            <person name="Mattick J.S."/>
            <person name="Hume D.A."/>
            <person name="Kai C."/>
            <person name="Sasaki D."/>
            <person name="Tomaru Y."/>
            <person name="Fukuda S."/>
            <person name="Kanamori-Katayama M."/>
            <person name="Suzuki M."/>
            <person name="Aoki J."/>
            <person name="Arakawa T."/>
            <person name="Iida J."/>
            <person name="Imamura K."/>
            <person name="Itoh M."/>
            <person name="Kato T."/>
            <person name="Kawaji H."/>
            <person name="Kawagashira N."/>
            <person name="Kawashima T."/>
            <person name="Kojima M."/>
            <person name="Kondo S."/>
            <person name="Konno H."/>
            <person name="Nakano K."/>
            <person name="Ninomiya N."/>
            <person name="Nishio T."/>
            <person name="Okada M."/>
            <person name="Plessy C."/>
            <person name="Shibata K."/>
            <person name="Shiraki T."/>
            <person name="Suzuki S."/>
            <person name="Tagami M."/>
            <person name="Waki K."/>
            <person name="Watahiki A."/>
            <person name="Okamura-Oho Y."/>
            <person name="Suzuki H."/>
            <person name="Kawai J."/>
            <person name="Hayashizaki Y."/>
        </authorList>
    </citation>
    <scope>NUCLEOTIDE SEQUENCE [LARGE SCALE MRNA]</scope>
    <source>
        <strain>C57BL/6J</strain>
        <strain>NOD</strain>
        <tissue>Sympathetic ganglion</tissue>
        <tissue>Testis</tissue>
        <tissue>Thymus</tissue>
    </source>
</reference>
<reference key="3">
    <citation type="journal article" date="2004" name="Genome Res.">
        <title>The status, quality, and expansion of the NIH full-length cDNA project: the Mammalian Gene Collection (MGC).</title>
        <authorList>
            <consortium name="The MGC Project Team"/>
        </authorList>
    </citation>
    <scope>NUCLEOTIDE SEQUENCE [LARGE SCALE MRNA]</scope>
    <source>
        <strain>Czech II</strain>
        <tissue>Mammary gland</tissue>
    </source>
</reference>
<reference key="4">
    <citation type="journal article" date="1999" name="Proc. Natl. Acad. Sci. U.S.A.">
        <title>PTEN modulates cell cycle progression and cell survival by regulating phosphatidylinositol 3,4,5,-trisphosphate and Akt/protein kinase B signaling pathway.</title>
        <authorList>
            <person name="Sun H."/>
            <person name="Lesche R."/>
            <person name="Li D.M."/>
            <person name="Liliental J."/>
            <person name="Zhang H."/>
            <person name="Gao J."/>
            <person name="Gavrilova N."/>
            <person name="Mueller B."/>
            <person name="Liu X."/>
            <person name="Wu H."/>
        </authorList>
    </citation>
    <scope>FUNCTION</scope>
</reference>
<reference key="5">
    <citation type="journal article" date="2007" name="Proc. Natl. Acad. Sci. U.S.A.">
        <title>Large-scale phosphorylation analysis of mouse liver.</title>
        <authorList>
            <person name="Villen J."/>
            <person name="Beausoleil S.A."/>
            <person name="Gerber S.A."/>
            <person name="Gygi S.P."/>
        </authorList>
    </citation>
    <scope>PHOSPHORYLATION [LARGE SCALE ANALYSIS] AT SER-385</scope>
    <scope>IDENTIFICATION BY MASS SPECTROMETRY [LARGE SCALE ANALYSIS]</scope>
    <source>
        <tissue>Liver</tissue>
    </source>
</reference>
<reference key="6">
    <citation type="journal article" date="2009" name="J. Biol. Chem.">
        <title>X-linked inhibitor of apoptosis protein (XIAP) regulates PTEN ubiquitination, content, and compartmentalization.</title>
        <authorList>
            <person name="Van Themsche C."/>
            <person name="Leblanc V."/>
            <person name="Parent S."/>
            <person name="Asselin E."/>
        </authorList>
    </citation>
    <scope>UBIQUITINATION BY XIAP/BIRC4</scope>
    <scope>SUBCELLULAR LOCATION</scope>
    <scope>INTERACTION WITH XIAP/BIRC4</scope>
</reference>
<reference key="7">
    <citation type="journal article" date="2009" name="Neuron">
        <title>DISC1 regulates new neuron development in the adult brain via modulation of AKT-mTOR signaling through KIAA1212.</title>
        <authorList>
            <person name="Kim J.Y."/>
            <person name="Duan X."/>
            <person name="Liu C.Y."/>
            <person name="Jang M.H."/>
            <person name="Guo J.U."/>
            <person name="Pow-anpongkul N."/>
            <person name="Kang E."/>
            <person name="Song H."/>
            <person name="Ming G.L."/>
        </authorList>
    </citation>
    <scope>FUNCTION</scope>
</reference>
<reference key="8">
    <citation type="journal article" date="2010" name="Blood">
        <title>ROCK1 functions as a suppressor of inflammatory cell migration by regulating PTEN phosphorylation and stability.</title>
        <authorList>
            <person name="Vemula S."/>
            <person name="Shi J."/>
            <person name="Hanneman P."/>
            <person name="Wei L."/>
            <person name="Kapur R."/>
        </authorList>
    </citation>
    <scope>PHOSPHORYLATION AT SER-380; THR-382 AND THR-383</scope>
    <scope>INTERACTION WITH ROCK1</scope>
</reference>
<reference key="9">
    <citation type="journal article" date="2010" name="Cell">
        <title>A tissue-specific atlas of mouse protein phosphorylation and expression.</title>
        <authorList>
            <person name="Huttlin E.L."/>
            <person name="Jedrychowski M.P."/>
            <person name="Elias J.E."/>
            <person name="Goswami T."/>
            <person name="Rad R."/>
            <person name="Beausoleil S.A."/>
            <person name="Villen J."/>
            <person name="Haas W."/>
            <person name="Sowa M.E."/>
            <person name="Gygi S.P."/>
        </authorList>
    </citation>
    <scope>PHOSPHORYLATION [LARGE SCALE ANALYSIS] AT SER-294 AND SER-385</scope>
    <scope>IDENTIFICATION BY MASS SPECTROMETRY [LARGE SCALE ANALYSIS]</scope>
    <source>
        <tissue>Brain</tissue>
        <tissue>Lung</tissue>
    </source>
</reference>
<reference key="10">
    <citation type="journal article" date="2010" name="J. Biol. Chem.">
        <title>Regulation of PTEN stability and activity by Plk3.</title>
        <authorList>
            <person name="Xu D."/>
            <person name="Yao Y."/>
            <person name="Jiang X."/>
            <person name="Lu L."/>
            <person name="Dai W."/>
        </authorList>
    </citation>
    <scope>PHOSPHORYLATION AT THR-366 AND SER-370</scope>
</reference>
<reference key="11">
    <citation type="journal article" date="2015" name="J. Mol. Cell Biol.">
        <title>Ndfip1 represses cell proliferation by controlling Pten localization and signaling specificity.</title>
        <authorList>
            <person name="Howitt J."/>
            <person name="Low L.H."/>
            <person name="Putz U."/>
            <person name="Doan A."/>
            <person name="Lackovic J."/>
            <person name="Goh C.P."/>
            <person name="Gunnersen J."/>
            <person name="Silke J."/>
            <person name="Tan S.S."/>
        </authorList>
    </citation>
    <scope>SUBCELLULAR LOCATION</scope>
</reference>
<reference key="12">
    <citation type="journal article" date="2020" name="Cell. Mol. Life Sci.">
        <title>The CRL4-DCAF13 ubiquitin E3 ligase supports oocyte meiotic resumption by targeting PTEN degradation.</title>
        <authorList>
            <person name="Zhang J."/>
            <person name="Zhang Y.L."/>
            <person name="Zhao L.W."/>
            <person name="Pi S.B."/>
            <person name="Zhang S.Y."/>
            <person name="Tong C."/>
            <person name="Fan H.Y."/>
        </authorList>
    </citation>
    <scope>FUNCTION</scope>
    <scope>UBIQUITINATION</scope>
</reference>
<reference key="13">
    <citation type="journal article" date="2021" name="EMBO Mol. Med.">
        <title>SLC6A20 transporter: a novel regulator of brain glycine homeostasis and NMDAR function.</title>
        <authorList>
            <person name="Bae M."/>
            <person name="Roh J.D."/>
            <person name="Kim Y."/>
            <person name="Kim S.S."/>
            <person name="Han H.M."/>
            <person name="Yang E."/>
            <person name="Kang H."/>
            <person name="Lee S."/>
            <person name="Kim J.Y."/>
            <person name="Kang R."/>
            <person name="Jung H."/>
            <person name="Yoo T."/>
            <person name="Kim H."/>
            <person name="Kim D."/>
            <person name="Oh H."/>
            <person name="Han S."/>
            <person name="Kim D."/>
            <person name="Han J."/>
            <person name="Bae Y.C."/>
            <person name="Kim H."/>
            <person name="Ahn S."/>
            <person name="Chan A.M."/>
            <person name="Lee D."/>
            <person name="Kim J.W."/>
            <person name="Kim E."/>
        </authorList>
    </citation>
    <scope>FUNCTION</scope>
    <scope>TISSUE SPECIFICITY</scope>
    <scope>SUBCELLULAR LOCATION</scope>
    <scope>PHOSPHORYLATION</scope>
    <scope>DOMAIN</scope>
    <scope>MUTAGENESIS OF 399-GLN--VAL-403</scope>
</reference>
<sequence length="403" mass="47152">MTAIIKEIVSRNKRRYQEDGFDLDLTYIYPNIIAMGFPAERLEGVYRNNIDDVVRFLDSKHKNHYKIYNLCAERHYDTAKFNCRVAQYPFEDHNPPQLELIKPFCEDLDQWLSEDDNHVAAIHCKAGKGRTGVMICAYLLHRGKFLKAQEALDFYGEVRTRDKKGVTIPSQRRYVYYYSYLLKNHLDYRPVALLFHKMMFETIPMFSGGTCNPQFVVCQLKVKIYSSNSGPTRREDKFMYFEFPQPLPVCGDIKVEFFHKQNKMLKKDKMFHFWVNTFFIPGPEETSEKVENGSLCDQEIDSICSIERADNDKEYLVLTLTKNDLDKANKDKANRYFSPNFKVKLYFTKTVEEPSNPEASSSTSVTPDVSDNEPDHYRYSDTTDSDPENEPFDEDQHSQITKV</sequence>
<feature type="initiator methionine" description="Removed" evidence="3">
    <location>
        <position position="1"/>
    </location>
</feature>
<feature type="chain" id="PRO_0000215905" description="Phosphatidylinositol 3,4,5-trisphosphate 3-phosphatase and dual-specificity protein phosphatase PTEN">
    <location>
        <begin position="2"/>
        <end position="403"/>
    </location>
</feature>
<feature type="domain" description="Phosphatase tensin-type" evidence="5">
    <location>
        <begin position="14"/>
        <end position="185"/>
    </location>
</feature>
<feature type="domain" description="C2 tensin-type" evidence="4">
    <location>
        <begin position="190"/>
        <end position="350"/>
    </location>
</feature>
<feature type="region of interest" description="Required for interaction with NOP53" evidence="3">
    <location>
        <begin position="338"/>
        <end position="348"/>
    </location>
</feature>
<feature type="region of interest" description="Disordered" evidence="6">
    <location>
        <begin position="352"/>
        <end position="403"/>
    </location>
</feature>
<feature type="short sequence motif" description="PDZ domain-binding" evidence="16">
    <location>
        <begin position="401"/>
        <end position="403"/>
    </location>
</feature>
<feature type="compositionally biased region" description="Low complexity" evidence="6">
    <location>
        <begin position="360"/>
        <end position="369"/>
    </location>
</feature>
<feature type="compositionally biased region" description="Acidic residues" evidence="6">
    <location>
        <begin position="383"/>
        <end position="393"/>
    </location>
</feature>
<feature type="active site" description="Phosphocysteine intermediate" evidence="5">
    <location>
        <position position="124"/>
    </location>
</feature>
<feature type="modified residue" description="N-acetylthreonine" evidence="3">
    <location>
        <position position="2"/>
    </location>
</feature>
<feature type="modified residue" description="Phosphoserine" evidence="18">
    <location>
        <position position="294"/>
    </location>
</feature>
<feature type="modified residue" description="Phosphothreonine" evidence="3">
    <location>
        <position position="319"/>
    </location>
</feature>
<feature type="modified residue" description="Phosphothreonine" evidence="3">
    <location>
        <position position="321"/>
    </location>
</feature>
<feature type="modified residue" description="Phosphotyrosine; by FRK" evidence="3">
    <location>
        <position position="336"/>
    </location>
</feature>
<feature type="modified residue" description="Phosphothreonine; by GSK3-beta and PLK3" evidence="11">
    <location>
        <position position="366"/>
    </location>
</feature>
<feature type="modified residue" description="Phosphoserine; by CK2 and PLK3" evidence="11">
    <location>
        <position position="370"/>
    </location>
</feature>
<feature type="modified residue" description="Phosphoserine; by ROCK1" evidence="10 14">
    <location>
        <position position="380"/>
    </location>
</feature>
<feature type="modified residue" description="Phosphothreonine; by ROCK1" evidence="10 14">
    <location>
        <position position="382"/>
    </location>
</feature>
<feature type="modified residue" description="Phosphothreonine; by ROCK1" evidence="10 14">
    <location>
        <position position="383"/>
    </location>
</feature>
<feature type="modified residue" description="Phosphoserine" evidence="17 18">
    <location>
        <position position="385"/>
    </location>
</feature>
<feature type="modified residue" description="Phosphothreonine" evidence="3">
    <location>
        <position position="401"/>
    </location>
</feature>
<feature type="cross-link" description="Glycyl lysine isopeptide (Lys-Gly) (interchain with G-Cter in ubiquitin)" evidence="3">
    <location>
        <position position="13"/>
    </location>
</feature>
<feature type="cross-link" description="Glycyl lysine isopeptide (Lys-Gly) (interchain with G-Cter in ubiquitin)" evidence="3">
    <location>
        <position position="289"/>
    </location>
</feature>
<feature type="mutagenesis site" description="Reduced excitatory synapse density in hippocampus. Decreased NMDAR-mediated synaptic transmission. Increased brain glycine levels." evidence="14">
    <location>
        <begin position="399"/>
        <end position="403"/>
    </location>
</feature>
<feature type="sequence conflict" description="In Ref. 2; BAE28651." evidence="15" ref="2">
    <location>
        <position position="50"/>
    </location>
</feature>
<comment type="function">
    <text evidence="2 3 7 9 13">Dual-specificity protein phosphatase, dephosphorylating tyrosine-, serine- and threonine-phosphorylated proteins. Also functions as a lipid phosphatase, removing the phosphate in the D3 position of the inositol ring of PtdIns(3,4,5)P3/phosphatidylinositol 3,4,5-trisphosphate, PtdIns(3,4)P2/phosphatidylinositol 3,4-diphosphate and PtdIns3P/phosphatidylinositol 3-phosphate with a preference for PtdIns(3,4,5)P3. Furthermore, this enzyme can also act as a cytosolic inositol 3-phosphatase acting on Ins(1,3,4,5,6)P5/inositol 1,3,4,5,6 pentakisphosphate and possibly Ins(1,3,4,5)P4/1D-myo-inositol 1,3,4,5-tetrakisphosphate (By similarity). Antagonizes the PI3K-AKT/PKB signaling pathway by dephosphorylating phosphoinositides and thereby modulating cell cycle progression and cell survival (PubMed:10339565, PubMed:19778506, PubMed:31492966). The unphosphorylated form cooperates with MAGI2 to suppress AKT1 activation. In motile cells, suppresses the formation of lateral pseudopods and thereby promotes cell polarization and directed movement. Dephosphorylates tyrosine-phosphorylated focal adhesion kinase and inhibits cell migration and integrin-mediated cell spreading and focal adhesion formation (By similarity). Required for growth factor-induced epithelial cell migration; growth factor stimulation induces PTEN phosphorylation which changes its binding preference from the p85 regulatory subunit of the PI3K kinase complex to DLC1 and results in translocation of the PTEN-DLC1 complex to the posterior of migrating cells to promote RHOA activation (By similarity). Meanwhile, TNS3 switches binding preference from DLC1 to p85 and the TNS3-p85 complex translocates to the leading edge of migrating cells to activate RAC1 activation (By similarity). Plays a role as a key modulator of the AKT-mTOR signaling pathway controlling the tempo of the process of newborn neurons integration during adult neurogenesis, including correct neuron positioning, dendritic development and synapse formation (PubMed:10339565, PubMed:19778506). Involved in the regulation of synaptic function in excitatory hippocampal synapses. Recruited to the postsynaptic membrane upon NMDA receptor activation, is required for the modulation of synaptic activity during plasticity. Enhancement of lipid phosphatase activity is able to drive depression of AMPA receptor-mediated synaptic responses, activity required for NMDA receptor-dependent long-term depression (LTD) (By similarity). May be a negative regulator of insulin signaling and glucose metabolism in adipose tissue. The nuclear monoubiquitinated form possesses greater apoptotic potential, whereas the cytoplasmic nonubiquitinated form induces less tumor suppressive ability (By similarity).</text>
</comment>
<comment type="catalytic activity">
    <reaction evidence="3">
        <text>a 1,2-diacyl-sn-glycero-3-phospho-(1D-myo-inositol-3,4,5-trisphosphate) + H2O = a 1,2-diacyl-sn-glycero-3-phospho-(1D-myo-inositol-4,5-bisphosphate) + phosphate</text>
        <dbReference type="Rhea" id="RHEA:25017"/>
        <dbReference type="ChEBI" id="CHEBI:15377"/>
        <dbReference type="ChEBI" id="CHEBI:43474"/>
        <dbReference type="ChEBI" id="CHEBI:57836"/>
        <dbReference type="ChEBI" id="CHEBI:58456"/>
        <dbReference type="EC" id="3.1.3.67"/>
    </reaction>
    <physiologicalReaction direction="left-to-right" evidence="3">
        <dbReference type="Rhea" id="RHEA:25018"/>
    </physiologicalReaction>
</comment>
<comment type="catalytic activity">
    <reaction evidence="3">
        <text>O-phospho-L-seryl-[protein] + H2O = L-seryl-[protein] + phosphate</text>
        <dbReference type="Rhea" id="RHEA:20629"/>
        <dbReference type="Rhea" id="RHEA-COMP:9863"/>
        <dbReference type="Rhea" id="RHEA-COMP:11604"/>
        <dbReference type="ChEBI" id="CHEBI:15377"/>
        <dbReference type="ChEBI" id="CHEBI:29999"/>
        <dbReference type="ChEBI" id="CHEBI:43474"/>
        <dbReference type="ChEBI" id="CHEBI:83421"/>
        <dbReference type="EC" id="3.1.3.16"/>
    </reaction>
    <physiologicalReaction direction="left-to-right" evidence="3">
        <dbReference type="Rhea" id="RHEA:20630"/>
    </physiologicalReaction>
</comment>
<comment type="catalytic activity">
    <reaction evidence="3">
        <text>O-phospho-L-threonyl-[protein] + H2O = L-threonyl-[protein] + phosphate</text>
        <dbReference type="Rhea" id="RHEA:47004"/>
        <dbReference type="Rhea" id="RHEA-COMP:11060"/>
        <dbReference type="Rhea" id="RHEA-COMP:11605"/>
        <dbReference type="ChEBI" id="CHEBI:15377"/>
        <dbReference type="ChEBI" id="CHEBI:30013"/>
        <dbReference type="ChEBI" id="CHEBI:43474"/>
        <dbReference type="ChEBI" id="CHEBI:61977"/>
        <dbReference type="EC" id="3.1.3.16"/>
    </reaction>
    <physiologicalReaction direction="left-to-right" evidence="3">
        <dbReference type="Rhea" id="RHEA:47005"/>
    </physiologicalReaction>
</comment>
<comment type="catalytic activity">
    <reaction evidence="3">
        <text>O-phospho-L-tyrosyl-[protein] + H2O = L-tyrosyl-[protein] + phosphate</text>
        <dbReference type="Rhea" id="RHEA:10684"/>
        <dbReference type="Rhea" id="RHEA-COMP:10136"/>
        <dbReference type="Rhea" id="RHEA-COMP:20101"/>
        <dbReference type="ChEBI" id="CHEBI:15377"/>
        <dbReference type="ChEBI" id="CHEBI:43474"/>
        <dbReference type="ChEBI" id="CHEBI:46858"/>
        <dbReference type="ChEBI" id="CHEBI:61978"/>
        <dbReference type="EC" id="3.1.3.48"/>
    </reaction>
    <physiologicalReaction direction="left-to-right" evidence="3">
        <dbReference type="Rhea" id="RHEA:10685"/>
    </physiologicalReaction>
</comment>
<comment type="catalytic activity">
    <reaction evidence="3">
        <text>1,2-dioctanoyl-sn-glycero-3-phospho-(1D-myo-inositol-3,4,5-trisphosphate) + H2O = 1,2-dioctanoyl-sn-glycero-3-phospho-(1D-myo-inositol-4,5-bisphosphate) + phosphate</text>
        <dbReference type="Rhea" id="RHEA:43552"/>
        <dbReference type="ChEBI" id="CHEBI:15377"/>
        <dbReference type="ChEBI" id="CHEBI:43474"/>
        <dbReference type="ChEBI" id="CHEBI:83416"/>
        <dbReference type="ChEBI" id="CHEBI:83419"/>
    </reaction>
    <physiologicalReaction direction="left-to-right" evidence="3">
        <dbReference type="Rhea" id="RHEA:43553"/>
    </physiologicalReaction>
</comment>
<comment type="catalytic activity">
    <reaction evidence="3">
        <text>1,2-dihexadecanoyl-sn-glycero-3-phospho-(1D-myo-inositol-3,4,5-trisphosphate) + H2O = 1,2-dihexadecanoyl-sn-glycero-3-phospho-(1D-myo-inositol-4,5-bisphosphate) + phosphate</text>
        <dbReference type="Rhea" id="RHEA:43560"/>
        <dbReference type="ChEBI" id="CHEBI:15377"/>
        <dbReference type="ChEBI" id="CHEBI:43474"/>
        <dbReference type="ChEBI" id="CHEBI:83420"/>
        <dbReference type="ChEBI" id="CHEBI:83423"/>
    </reaction>
    <physiologicalReaction direction="left-to-right" evidence="3">
        <dbReference type="Rhea" id="RHEA:43561"/>
    </physiologicalReaction>
</comment>
<comment type="catalytic activity">
    <reaction evidence="3">
        <text>1D-myo-inositol 1,3,4,5,6-pentakisphosphate + H2O = 1D-myo-inositol 1,4,5,6-tetrakisphosphate + phosphate</text>
        <dbReference type="Rhea" id="RHEA:77143"/>
        <dbReference type="ChEBI" id="CHEBI:15377"/>
        <dbReference type="ChEBI" id="CHEBI:43474"/>
        <dbReference type="ChEBI" id="CHEBI:57627"/>
        <dbReference type="ChEBI" id="CHEBI:57733"/>
    </reaction>
    <physiologicalReaction direction="left-to-right" evidence="3">
        <dbReference type="Rhea" id="RHEA:77144"/>
    </physiologicalReaction>
</comment>
<comment type="catalytic activity">
    <reaction evidence="3">
        <text>1D-myo-inositol 1,3,4,5-tetrakisphosphate + H2O = 1D-myo-inositol 1,4,5-trisphosphate + phosphate</text>
        <dbReference type="Rhea" id="RHEA:77155"/>
        <dbReference type="ChEBI" id="CHEBI:15377"/>
        <dbReference type="ChEBI" id="CHEBI:43474"/>
        <dbReference type="ChEBI" id="CHEBI:57895"/>
        <dbReference type="ChEBI" id="CHEBI:203600"/>
    </reaction>
    <physiologicalReaction direction="left-to-right" evidence="3">
        <dbReference type="Rhea" id="RHEA:77156"/>
    </physiologicalReaction>
</comment>
<comment type="cofactor">
    <cofactor>
        <name>Mg(2+)</name>
        <dbReference type="ChEBI" id="CHEBI:18420"/>
    </cofactor>
</comment>
<comment type="subunit">
    <text evidence="2 3 8 10">Monomer. The unphosphorylated form interacts with the second PDZ domain of MAGI2 (By similarity). Interacts with MAGI2, MAGI3, MAST1 and MAST3, but neither with MAST4 nor with DLG5; interaction with MAGI2 increases protein stability (By similarity). Interacts with NEDD4 (By similarity). Interacts with NDFIP1 and NDFIP2; in the presence of NEDD4 or ITCH, this interaction promotes PTEN ubiquitination (By similarity). Interacts (via C2 domain) with FRK (By similarity). Interacts with USP7; the interaction is direct (By similarity). Interacts with ROCK1 (PubMed:20008297). Interacts with XIAP/BIRC4 (PubMed:19473982). Interacts with STK11; the interaction phosphorylates PTEN (By similarity). Interacts with PPP1R16B (By similarity). Interacts with NOP53; regulates PTEN phosphorylation and increases its stability (By similarity). Interacts (via PDZ domain-binding motif) with DLG4; the interaction is induced by NMDA and is required for PTEN location at postsynaptic density (By similarity). Interacts with the regulatory p85 subunit of the PI3K kinase complex and with Rho GTPase-activating protein DLC1; in resting cells, interacts (via C2 tensin-type domain) with p85 but, following growth factor stimulation, PTEN is phosphorylated which leads to weakened interaction with p85 and enhanced interaction (via C2 tensin-type domain) with DLC1 while p85 interaction with TNS3 increases (By similarity).</text>
</comment>
<comment type="interaction">
    <interactant intactId="EBI-1186266">
        <id>O08586</id>
    </interactant>
    <interactant intactId="EBI-1186252">
        <id>P49452</id>
        <label>Cenpc</label>
    </interactant>
    <organismsDiffer>false</organismsDiffer>
    <experiments>2</experiments>
</comment>
<comment type="interaction">
    <interactant intactId="EBI-1186266">
        <id>O08586</id>
    </interactant>
    <interactant intactId="EBI-538451">
        <id>Q9JHL1</id>
        <label>Nherf2</label>
    </interactant>
    <organismsDiffer>false</organismsDiffer>
    <experiments>3</experiments>
</comment>
<comment type="interaction">
    <interactant intactId="EBI-1186266">
        <id>O08586</id>
    </interactant>
    <interactant intactId="EBI-16170692">
        <id>B1AZ99</id>
        <label>Otud3</label>
    </interactant>
    <organismsDiffer>false</organismsDiffer>
    <experiments>2</experiments>
</comment>
<comment type="interaction">
    <interactant intactId="EBI-1186266">
        <id>O08586</id>
    </interactant>
    <interactant intactId="EBI-474016">
        <id>P02340</id>
        <label>Tp53</label>
    </interactant>
    <organismsDiffer>false</organismsDiffer>
    <experiments>4</experiments>
</comment>
<comment type="interaction">
    <interactant intactId="EBI-1186266">
        <id>O08586</id>
    </interactant>
    <interactant intactId="EBI-413074">
        <id>P62991</id>
        <label>Ubc</label>
    </interactant>
    <organismsDiffer>false</organismsDiffer>
    <experiments>2</experiments>
</comment>
<comment type="interaction">
    <interactant intactId="EBI-1186266">
        <id>O08586</id>
    </interactant>
    <interactant intactId="EBI-1216254">
        <id>Q6A4J8</id>
        <label>Usp7</label>
    </interactant>
    <organismsDiffer>false</organismsDiffer>
    <experiments>2</experiments>
</comment>
<comment type="subcellular location">
    <subcellularLocation>
        <location evidence="8 12">Cytoplasm</location>
    </subcellularLocation>
    <subcellularLocation>
        <location evidence="8 12">Nucleus</location>
    </subcellularLocation>
    <subcellularLocation>
        <location evidence="3">Nucleus</location>
        <location evidence="3">PML body</location>
    </subcellularLocation>
    <subcellularLocation>
        <location evidence="14">Cell projection</location>
        <location evidence="14">Dendritic spine</location>
    </subcellularLocation>
    <subcellularLocation>
        <location evidence="2">Postsynaptic density</location>
    </subcellularLocation>
    <text evidence="2 3 8">Monoubiquitinated form is nuclear (By similarity). Nonubiquitinated form is cytoplasmic (By similarity). Colocalized with PML and USP7 in PML nuclear bodies (By similarity). XIAP/BIRC4 promotes its nuclear localization (PubMed:19473982). Associares with the postsynaptic density in response to NMDAR activation (By similarity).</text>
</comment>
<comment type="tissue specificity">
    <text evidence="14">Expressed in brain (at protein level).</text>
</comment>
<comment type="PTM">
    <text evidence="3 8 10 11">Constitutively phosphorylated by CK2 under normal conditions. Phosphorylation results in an inhibited activity towards PIP3. Phosphorylation can both inhibit or promote PDZ-binding. Phosphorylation at Tyr-336 by FRK/PTK5 protects this protein from ubiquitin-mediated degradation probably by inhibiting its binding to NEDD4 (By similarity). Phosphorylation by PLK3 promotes its stability and prevents its degradation by the proteasome. Phosphorylation by ROCK1 is essential for its stability and activity. Phosphorylated on Thr-319 and Thr-321 in the C2-type tensin domain following EGF stimulation which changes its binding preference from the p85 regulatory subunit of the PI3K kinase complex to DLC1 (By similarity).</text>
</comment>
<comment type="PTM">
    <text evidence="1 8">Monoubiquitinated; monoubiquitination is increased in presence of retinoic acid. Deubiquitinated by USP7; leading to its nuclear exclusion. Monoubiquitination of one of either Lys-13 and Lys-289 amino acid is sufficient to modulate PTEN compartmentalization (By similarity). Ubiquitinated by XIAP/BIRC4.</text>
</comment>
<comment type="PTM">
    <text evidence="13">Ubiquitinated by the DCX(DCAF13) E3 ubiquitin ligase complex, leading to its degradation.</text>
</comment>
<comment type="PTM">
    <text evidence="3">ISGylated. ISGylation promotes PTEN degradation.</text>
</comment>
<comment type="similarity">
    <text evidence="15">Belongs to the PTEN phosphatase protein family.</text>
</comment>